<keyword id="KW-0027">Amidation</keyword>
<keyword id="KW-0903">Direct protein sequencing</keyword>
<keyword id="KW-0527">Neuropeptide</keyword>
<keyword id="KW-0964">Secreted</keyword>
<reference evidence="4" key="1">
    <citation type="journal article" date="2009" name="BMC Evol. Biol.">
        <title>A proteomic approach for studying insect phylogeny: CAPA peptides of ancient insect taxa (Dictyoptera, Blattoptera) as a test case.</title>
        <authorList>
            <person name="Roth S."/>
            <person name="Fromm B."/>
            <person name="Gaede G."/>
            <person name="Predel R."/>
        </authorList>
    </citation>
    <scope>PROTEIN SEQUENCE</scope>
    <scope>AMIDATION AT VAL-11</scope>
    <source>
        <tissue evidence="2">Abdominal perisympathetic organs</tissue>
    </source>
</reference>
<evidence type="ECO:0000255" key="1"/>
<evidence type="ECO:0000269" key="2">
    <source>
    </source>
</evidence>
<evidence type="ECO:0000303" key="3">
    <source>
    </source>
</evidence>
<evidence type="ECO:0000305" key="4"/>
<comment type="function">
    <text evidence="4">Mediates visceral muscle contractile activity (myotropic activity).</text>
</comment>
<comment type="subcellular location">
    <subcellularLocation>
        <location evidence="4">Secreted</location>
    </subcellularLocation>
</comment>
<comment type="similarity">
    <text evidence="1">Belongs to the periviscerokinin family.</text>
</comment>
<dbReference type="GO" id="GO:0005576">
    <property type="term" value="C:extracellular region"/>
    <property type="evidence" value="ECO:0007669"/>
    <property type="project" value="UniProtKB-SubCell"/>
</dbReference>
<dbReference type="GO" id="GO:0007218">
    <property type="term" value="P:neuropeptide signaling pathway"/>
    <property type="evidence" value="ECO:0007669"/>
    <property type="project" value="UniProtKB-KW"/>
</dbReference>
<dbReference type="InterPro" id="IPR013231">
    <property type="entry name" value="Periviscerokinin"/>
</dbReference>
<dbReference type="Pfam" id="PF08259">
    <property type="entry name" value="Periviscerokin"/>
    <property type="match status" value="1"/>
</dbReference>
<sequence length="11" mass="1107">GSSGLISMTRV</sequence>
<organism>
    <name type="scientific">Therea petiveriana</name>
    <name type="common">Domino cockroach</name>
    <dbReference type="NCBI Taxonomy" id="45965"/>
    <lineage>
        <taxon>Eukaryota</taxon>
        <taxon>Metazoa</taxon>
        <taxon>Ecdysozoa</taxon>
        <taxon>Arthropoda</taxon>
        <taxon>Hexapoda</taxon>
        <taxon>Insecta</taxon>
        <taxon>Pterygota</taxon>
        <taxon>Neoptera</taxon>
        <taxon>Polyneoptera</taxon>
        <taxon>Dictyoptera</taxon>
        <taxon>Blattodea</taxon>
        <taxon>Corydioidea</taxon>
        <taxon>Corydiidae</taxon>
        <taxon>Therea</taxon>
    </lineage>
</organism>
<name>PVK3_THEPT</name>
<accession>P85789</accession>
<proteinExistence type="evidence at protein level"/>
<protein>
    <recommendedName>
        <fullName evidence="3">Periviscerokinin-3</fullName>
        <shortName evidence="3">ThePe-PVK-3</shortName>
    </recommendedName>
</protein>
<feature type="peptide" id="PRO_0000378857" description="Periviscerokinin-3" evidence="2">
    <location>
        <begin position="1"/>
        <end position="11"/>
    </location>
</feature>
<feature type="modified residue" description="Valine amide" evidence="2">
    <location>
        <position position="11"/>
    </location>
</feature>